<organism>
    <name type="scientific">Escherichia coli (strain K12)</name>
    <dbReference type="NCBI Taxonomy" id="83333"/>
    <lineage>
        <taxon>Bacteria</taxon>
        <taxon>Pseudomonadati</taxon>
        <taxon>Pseudomonadota</taxon>
        <taxon>Gammaproteobacteria</taxon>
        <taxon>Enterobacterales</taxon>
        <taxon>Enterobacteriaceae</taxon>
        <taxon>Escherichia</taxon>
    </lineage>
</organism>
<comment type="function">
    <text evidence="4">Antitoxin component of a type II toxin-antitoxin (TA) system. Functions as an mRNA interferase antitoxin; overexpression prevents HicA-mediated cessation of cell growth and inhibition of cell proliferation.</text>
</comment>
<comment type="subunit">
    <text evidence="1">Probably forms a complex with the mRNA interferase HicA; when the 2 dissociate the mRNA interferase becomes active.</text>
</comment>
<comment type="induction">
    <text evidence="4">Induced by amino acid starvation, carbon starvation and when translation is blocked. Induction no longer occurs in the absence of Lon protease suggesting, by homology to other toxin-antitoxin systems, that Lon may degrade the HicB antitoxin. A member of the hicA-hicB operon.</text>
</comment>
<comment type="PTM">
    <text evidence="1">May be degraded by Lon protease.</text>
</comment>
<comment type="disruption phenotype">
    <text evidence="3">Disruption suppresses an rpoE disruption; in a wild-type background disruption down-regulates extracytoplasmic stress responses and outer membrane vesicle production.</text>
</comment>
<comment type="similarity">
    <text evidence="5">Belongs to the HicB antitoxin family.</text>
</comment>
<comment type="sequence caution" evidence="5">
    <conflict type="erroneous initiation">
        <sequence resource="EMBL-CDS" id="BAE76439"/>
    </conflict>
    <text>Extended N-terminus.</text>
</comment>
<proteinExistence type="evidence at protein level"/>
<accession>P67697</accession>
<accession>P76107</accession>
<accession>Q2MBB7</accession>
<evidence type="ECO:0000250" key="1"/>
<evidence type="ECO:0000255" key="2">
    <source>
        <dbReference type="PROSITE-ProRule" id="PRU00257"/>
    </source>
</evidence>
<evidence type="ECO:0000269" key="3">
    <source>
    </source>
</evidence>
<evidence type="ECO:0000269" key="4">
    <source>
    </source>
</evidence>
<evidence type="ECO:0000305" key="5"/>
<evidence type="ECO:0007829" key="6">
    <source>
        <dbReference type="PDB" id="6HPB"/>
    </source>
</evidence>
<evidence type="ECO:0007829" key="7">
    <source>
        <dbReference type="PDB" id="6HPC"/>
    </source>
</evidence>
<protein>
    <recommendedName>
        <fullName>Antitoxin HicB</fullName>
    </recommendedName>
</protein>
<dbReference type="EMBL" id="U00096">
    <property type="protein sequence ID" value="AAC74520.2"/>
    <property type="molecule type" value="Genomic_DNA"/>
</dbReference>
<dbReference type="EMBL" id="AP009048">
    <property type="protein sequence ID" value="BAE76439.1"/>
    <property type="status" value="ALT_INIT"/>
    <property type="molecule type" value="Genomic_DNA"/>
</dbReference>
<dbReference type="PIR" id="A64896">
    <property type="entry name" value="A64896"/>
</dbReference>
<dbReference type="RefSeq" id="NP_415955.2">
    <property type="nucleotide sequence ID" value="NC_000913.3"/>
</dbReference>
<dbReference type="RefSeq" id="WP_001270286.1">
    <property type="nucleotide sequence ID" value="NZ_SSZK01000021.1"/>
</dbReference>
<dbReference type="PDB" id="6HPB">
    <property type="method" value="X-ray"/>
    <property type="resolution" value="2.28 A"/>
    <property type="chains" value="B/D=1-138"/>
</dbReference>
<dbReference type="PDB" id="6HPC">
    <property type="method" value="X-ray"/>
    <property type="resolution" value="2.26 A"/>
    <property type="chains" value="A/B=1-138"/>
</dbReference>
<dbReference type="PDBsum" id="6HPB"/>
<dbReference type="PDBsum" id="6HPC"/>
<dbReference type="SMR" id="P67697"/>
<dbReference type="BioGRID" id="4259496">
    <property type="interactions" value="136"/>
</dbReference>
<dbReference type="BioGRID" id="850362">
    <property type="interactions" value="1"/>
</dbReference>
<dbReference type="ComplexPortal" id="CPX-4119">
    <property type="entry name" value="HicAB toxin-antitoxin complex"/>
</dbReference>
<dbReference type="DIP" id="DIP-48269N"/>
<dbReference type="FunCoup" id="P67697">
    <property type="interactions" value="6"/>
</dbReference>
<dbReference type="IntAct" id="P67697">
    <property type="interactions" value="1"/>
</dbReference>
<dbReference type="STRING" id="511145.b1438"/>
<dbReference type="jPOST" id="P67697"/>
<dbReference type="PaxDb" id="511145-b1438"/>
<dbReference type="EnsemblBacteria" id="AAC74520">
    <property type="protein sequence ID" value="AAC74520"/>
    <property type="gene ID" value="b1438"/>
</dbReference>
<dbReference type="GeneID" id="93775583"/>
<dbReference type="GeneID" id="946001"/>
<dbReference type="KEGG" id="ecj:JW1433"/>
<dbReference type="KEGG" id="eco:b1438"/>
<dbReference type="PATRIC" id="fig|511145.12.peg.1503"/>
<dbReference type="EchoBASE" id="EB3523"/>
<dbReference type="eggNOG" id="COG1598">
    <property type="taxonomic scope" value="Bacteria"/>
</dbReference>
<dbReference type="HOGENOM" id="CLU_140890_2_0_6"/>
<dbReference type="InParanoid" id="P67697"/>
<dbReference type="OMA" id="HNAMIEK"/>
<dbReference type="OrthoDB" id="5772151at2"/>
<dbReference type="BioCyc" id="EcoCyc:G6749-MONOMER"/>
<dbReference type="PRO" id="PR:P67697"/>
<dbReference type="Proteomes" id="UP000000625">
    <property type="component" value="Chromosome"/>
</dbReference>
<dbReference type="GO" id="GO:0110001">
    <property type="term" value="C:toxin-antitoxin complex"/>
    <property type="evidence" value="ECO:0000353"/>
    <property type="project" value="ComplexPortal"/>
</dbReference>
<dbReference type="GO" id="GO:0003677">
    <property type="term" value="F:DNA binding"/>
    <property type="evidence" value="ECO:0007669"/>
    <property type="project" value="UniProtKB-KW"/>
</dbReference>
<dbReference type="GO" id="GO:0042802">
    <property type="term" value="F:identical protein binding"/>
    <property type="evidence" value="ECO:0000314"/>
    <property type="project" value="EcoCyc"/>
</dbReference>
<dbReference type="GO" id="GO:0006355">
    <property type="term" value="P:regulation of DNA-templated transcription"/>
    <property type="evidence" value="ECO:0000314"/>
    <property type="project" value="ComplexPortal"/>
</dbReference>
<dbReference type="GO" id="GO:0040008">
    <property type="term" value="P:regulation of growth"/>
    <property type="evidence" value="ECO:0000303"/>
    <property type="project" value="ComplexPortal"/>
</dbReference>
<dbReference type="GO" id="GO:0006950">
    <property type="term" value="P:response to stress"/>
    <property type="evidence" value="ECO:0000316"/>
    <property type="project" value="EcoCyc"/>
</dbReference>
<dbReference type="CDD" id="cd00093">
    <property type="entry name" value="HTH_XRE"/>
    <property type="match status" value="1"/>
</dbReference>
<dbReference type="Gene3D" id="3.30.160.250">
    <property type="match status" value="1"/>
</dbReference>
<dbReference type="InterPro" id="IPR001387">
    <property type="entry name" value="Cro/C1-type_HTH"/>
</dbReference>
<dbReference type="InterPro" id="IPR031807">
    <property type="entry name" value="HicB-like"/>
</dbReference>
<dbReference type="InterPro" id="IPR010982">
    <property type="entry name" value="Lambda_DNA-bd_dom_sf"/>
</dbReference>
<dbReference type="InterPro" id="IPR051404">
    <property type="entry name" value="TA_system_antitoxin"/>
</dbReference>
<dbReference type="InterPro" id="IPR035069">
    <property type="entry name" value="TTHA1013/TTHA0281-like"/>
</dbReference>
<dbReference type="PANTHER" id="PTHR34504">
    <property type="entry name" value="ANTITOXIN HICB"/>
    <property type="match status" value="1"/>
</dbReference>
<dbReference type="PANTHER" id="PTHR34504:SF4">
    <property type="entry name" value="ANTITOXIN HICB"/>
    <property type="match status" value="1"/>
</dbReference>
<dbReference type="Pfam" id="PF15919">
    <property type="entry name" value="HicB_lk_antitox"/>
    <property type="match status" value="1"/>
</dbReference>
<dbReference type="Pfam" id="PF01381">
    <property type="entry name" value="HTH_3"/>
    <property type="match status" value="1"/>
</dbReference>
<dbReference type="SMART" id="SM00530">
    <property type="entry name" value="HTH_XRE"/>
    <property type="match status" value="1"/>
</dbReference>
<dbReference type="SUPFAM" id="SSF47413">
    <property type="entry name" value="lambda repressor-like DNA-binding domains"/>
    <property type="match status" value="1"/>
</dbReference>
<dbReference type="SUPFAM" id="SSF143100">
    <property type="entry name" value="TTHA1013/TTHA0281-like"/>
    <property type="match status" value="1"/>
</dbReference>
<dbReference type="PROSITE" id="PS50943">
    <property type="entry name" value="HTH_CROC1"/>
    <property type="match status" value="1"/>
</dbReference>
<gene>
    <name type="primary">hicB</name>
    <name type="synonym">ydcQ</name>
    <name type="ordered locus">b1438</name>
    <name type="ordered locus">JW1433</name>
</gene>
<keyword id="KW-0002">3D-structure</keyword>
<keyword id="KW-0238">DNA-binding</keyword>
<keyword id="KW-1185">Reference proteome</keyword>
<keyword id="KW-0678">Repressor</keyword>
<keyword id="KW-0346">Stress response</keyword>
<keyword id="KW-1277">Toxin-antitoxin system</keyword>
<keyword id="KW-0804">Transcription</keyword>
<keyword id="KW-0805">Transcription regulation</keyword>
<feature type="chain" id="PRO_0000149757" description="Antitoxin HicB">
    <location>
        <begin position="1"/>
        <end position="138"/>
    </location>
</feature>
<feature type="domain" description="HTH cro/C1-type" evidence="2">
    <location>
        <begin position="82"/>
        <end position="136"/>
    </location>
</feature>
<feature type="DNA-binding region" description="H-T-H motif" evidence="2">
    <location>
        <begin position="93"/>
        <end position="112"/>
    </location>
</feature>
<feature type="strand" evidence="7">
    <location>
        <begin position="2"/>
        <end position="9"/>
    </location>
</feature>
<feature type="strand" evidence="7">
    <location>
        <begin position="13"/>
        <end position="21"/>
    </location>
</feature>
<feature type="strand" evidence="7">
    <location>
        <begin position="26"/>
        <end position="31"/>
    </location>
</feature>
<feature type="helix" evidence="7">
    <location>
        <begin position="32"/>
        <end position="53"/>
    </location>
</feature>
<feature type="strand" evidence="7">
    <location>
        <begin position="68"/>
        <end position="71"/>
    </location>
</feature>
<feature type="helix" evidence="7">
    <location>
        <begin position="74"/>
        <end position="89"/>
    </location>
</feature>
<feature type="helix" evidence="7">
    <location>
        <begin position="93"/>
        <end position="100"/>
    </location>
</feature>
<feature type="helix" evidence="7">
    <location>
        <begin position="105"/>
        <end position="110"/>
    </location>
</feature>
<feature type="strand" evidence="6">
    <location>
        <begin position="113"/>
        <end position="115"/>
    </location>
</feature>
<feature type="helix" evidence="7">
    <location>
        <begin position="119"/>
        <end position="128"/>
    </location>
</feature>
<feature type="strand" evidence="7">
    <location>
        <begin position="132"/>
        <end position="137"/>
    </location>
</feature>
<sequence>MRYPVTLTPAPEGGYMVSFVDIPEALTQGETVAEAMEAAKDALLTAFDFYFEDNELIPLPSPLNSHDHFIEVPLSVASKVLLLNAFLQSEITQQELARRIGKPKQEITRLFNLHHATKIDAVQLAAKALGKELSLVMV</sequence>
<name>HICB_ECOLI</name>
<reference key="1">
    <citation type="journal article" date="1997" name="Science">
        <title>The complete genome sequence of Escherichia coli K-12.</title>
        <authorList>
            <person name="Blattner F.R."/>
            <person name="Plunkett G. III"/>
            <person name="Bloch C.A."/>
            <person name="Perna N.T."/>
            <person name="Burland V."/>
            <person name="Riley M."/>
            <person name="Collado-Vides J."/>
            <person name="Glasner J.D."/>
            <person name="Rode C.K."/>
            <person name="Mayhew G.F."/>
            <person name="Gregor J."/>
            <person name="Davis N.W."/>
            <person name="Kirkpatrick H.A."/>
            <person name="Goeden M.A."/>
            <person name="Rose D.J."/>
            <person name="Mau B."/>
            <person name="Shao Y."/>
        </authorList>
    </citation>
    <scope>NUCLEOTIDE SEQUENCE [LARGE SCALE GENOMIC DNA]</scope>
    <source>
        <strain>K12 / MG1655 / ATCC 47076</strain>
    </source>
</reference>
<reference key="2">
    <citation type="journal article" date="2006" name="Mol. Syst. Biol.">
        <title>Highly accurate genome sequences of Escherichia coli K-12 strains MG1655 and W3110.</title>
        <authorList>
            <person name="Hayashi K."/>
            <person name="Morooka N."/>
            <person name="Yamamoto Y."/>
            <person name="Fujita K."/>
            <person name="Isono K."/>
            <person name="Choi S."/>
            <person name="Ohtsubo E."/>
            <person name="Baba T."/>
            <person name="Wanner B.L."/>
            <person name="Mori H."/>
            <person name="Horiuchi T."/>
        </authorList>
    </citation>
    <scope>NUCLEOTIDE SEQUENCE [LARGE SCALE GENOMIC DNA]</scope>
    <source>
        <strain>K12 / W3110 / ATCC 27325 / DSM 5911</strain>
    </source>
</reference>
<reference key="3">
    <citation type="journal article" date="2006" name="Bioinformatics">
        <title>The HicAB cassette, a putative novel, RNA-targeting toxin-antitoxin system in archaea and bacteria.</title>
        <authorList>
            <person name="Makarova K.S."/>
            <person name="Grishin N.V."/>
            <person name="Koonin E.V."/>
        </authorList>
    </citation>
    <scope>PREDICTION OF FUNCTION</scope>
</reference>
<reference key="4">
    <citation type="journal article" date="2007" name="J. Bacteriol.">
        <title>A suppressor of cell death caused by the loss of sigmaE downregulates extracytoplasmic stress responses and outer membrane vesicle production in Escherichia coli.</title>
        <authorList>
            <person name="Button J.E."/>
            <person name="Silhavy T.J."/>
            <person name="Ruiz N."/>
        </authorList>
    </citation>
    <scope>SUPPRESSION OF RPOE ESSENTIALITY</scope>
    <scope>DISRUPTION PHENOTYPE</scope>
    <source>
        <strain>K12 / MC4100 / ATCC 35695 / DSM 6574</strain>
    </source>
</reference>
<reference key="5">
    <citation type="journal article" date="2009" name="J. Bacteriol.">
        <title>HicA of Escherichia coli defines a novel family of translation-independent mRNA interferases in bacteria and archaea.</title>
        <authorList>
            <person name="Jorgensen M.G."/>
            <person name="Pandey D.P."/>
            <person name="Jaskolska M."/>
            <person name="Gerdes K."/>
        </authorList>
    </citation>
    <scope>FUNCTION AS AN MRNA INTERFERASE ANTITOXIN</scope>
    <scope>INDUCTION</scope>
    <scope>OPERON STRUCTURE</scope>
    <source>
        <strain>K12 / MG1655 / ATCC 47076</strain>
    </source>
</reference>